<gene>
    <name evidence="1" type="primary">hslV</name>
    <name type="ordered locus">lpl0677</name>
</gene>
<comment type="function">
    <text evidence="1">Protease subunit of a proteasome-like degradation complex believed to be a general protein degrading machinery.</text>
</comment>
<comment type="catalytic activity">
    <reaction evidence="1">
        <text>ATP-dependent cleavage of peptide bonds with broad specificity.</text>
        <dbReference type="EC" id="3.4.25.2"/>
    </reaction>
</comment>
<comment type="activity regulation">
    <text evidence="1">Allosterically activated by HslU binding.</text>
</comment>
<comment type="subunit">
    <text evidence="1">A double ring-shaped homohexamer of HslV is capped on each side by a ring-shaped HslU homohexamer. The assembly of the HslU/HslV complex is dependent on binding of ATP.</text>
</comment>
<comment type="subcellular location">
    <subcellularLocation>
        <location evidence="1">Cytoplasm</location>
    </subcellularLocation>
</comment>
<comment type="similarity">
    <text evidence="1">Belongs to the peptidase T1B family. HslV subfamily.</text>
</comment>
<name>HSLV_LEGPL</name>
<reference key="1">
    <citation type="journal article" date="2004" name="Nat. Genet.">
        <title>Evidence in the Legionella pneumophila genome for exploitation of host cell functions and high genome plasticity.</title>
        <authorList>
            <person name="Cazalet C."/>
            <person name="Rusniok C."/>
            <person name="Brueggemann H."/>
            <person name="Zidane N."/>
            <person name="Magnier A."/>
            <person name="Ma L."/>
            <person name="Tichit M."/>
            <person name="Jarraud S."/>
            <person name="Bouchier C."/>
            <person name="Vandenesch F."/>
            <person name="Kunst F."/>
            <person name="Etienne J."/>
            <person name="Glaser P."/>
            <person name="Buchrieser C."/>
        </authorList>
    </citation>
    <scope>NUCLEOTIDE SEQUENCE [LARGE SCALE GENOMIC DNA]</scope>
    <source>
        <strain>Lens</strain>
    </source>
</reference>
<keyword id="KW-0021">Allosteric enzyme</keyword>
<keyword id="KW-0963">Cytoplasm</keyword>
<keyword id="KW-0378">Hydrolase</keyword>
<keyword id="KW-0479">Metal-binding</keyword>
<keyword id="KW-0645">Protease</keyword>
<keyword id="KW-0915">Sodium</keyword>
<keyword id="KW-0346">Stress response</keyword>
<keyword id="KW-0888">Threonine protease</keyword>
<proteinExistence type="inferred from homology"/>
<protein>
    <recommendedName>
        <fullName evidence="1">ATP-dependent protease subunit HslV</fullName>
        <ecNumber evidence="1">3.4.25.2</ecNumber>
    </recommendedName>
</protein>
<dbReference type="EC" id="3.4.25.2" evidence="1"/>
<dbReference type="EMBL" id="CR628337">
    <property type="protein sequence ID" value="CAH14911.1"/>
    <property type="molecule type" value="Genomic_DNA"/>
</dbReference>
<dbReference type="RefSeq" id="WP_011214860.1">
    <property type="nucleotide sequence ID" value="NC_006369.1"/>
</dbReference>
<dbReference type="SMR" id="Q5WYQ9"/>
<dbReference type="MEROPS" id="T01.006"/>
<dbReference type="KEGG" id="lpf:lpl0677"/>
<dbReference type="LegioList" id="lpl0677"/>
<dbReference type="HOGENOM" id="CLU_093872_1_0_6"/>
<dbReference type="Proteomes" id="UP000002517">
    <property type="component" value="Chromosome"/>
</dbReference>
<dbReference type="GO" id="GO:0009376">
    <property type="term" value="C:HslUV protease complex"/>
    <property type="evidence" value="ECO:0007669"/>
    <property type="project" value="UniProtKB-UniRule"/>
</dbReference>
<dbReference type="GO" id="GO:0005839">
    <property type="term" value="C:proteasome core complex"/>
    <property type="evidence" value="ECO:0007669"/>
    <property type="project" value="InterPro"/>
</dbReference>
<dbReference type="GO" id="GO:0046872">
    <property type="term" value="F:metal ion binding"/>
    <property type="evidence" value="ECO:0007669"/>
    <property type="project" value="UniProtKB-KW"/>
</dbReference>
<dbReference type="GO" id="GO:0004298">
    <property type="term" value="F:threonine-type endopeptidase activity"/>
    <property type="evidence" value="ECO:0007669"/>
    <property type="project" value="UniProtKB-KW"/>
</dbReference>
<dbReference type="GO" id="GO:0051603">
    <property type="term" value="P:proteolysis involved in protein catabolic process"/>
    <property type="evidence" value="ECO:0007669"/>
    <property type="project" value="InterPro"/>
</dbReference>
<dbReference type="CDD" id="cd01913">
    <property type="entry name" value="protease_HslV"/>
    <property type="match status" value="1"/>
</dbReference>
<dbReference type="FunFam" id="3.60.20.10:FF:000002">
    <property type="entry name" value="ATP-dependent protease subunit HslV"/>
    <property type="match status" value="1"/>
</dbReference>
<dbReference type="Gene3D" id="3.60.20.10">
    <property type="entry name" value="Glutamine Phosphoribosylpyrophosphate, subunit 1, domain 1"/>
    <property type="match status" value="1"/>
</dbReference>
<dbReference type="HAMAP" id="MF_00248">
    <property type="entry name" value="HslV"/>
    <property type="match status" value="1"/>
</dbReference>
<dbReference type="InterPro" id="IPR022281">
    <property type="entry name" value="ATP-dep_Prtase_HsIV_su"/>
</dbReference>
<dbReference type="InterPro" id="IPR029055">
    <property type="entry name" value="Ntn_hydrolases_N"/>
</dbReference>
<dbReference type="InterPro" id="IPR001353">
    <property type="entry name" value="Proteasome_sua/b"/>
</dbReference>
<dbReference type="InterPro" id="IPR023333">
    <property type="entry name" value="Proteasome_suB-type"/>
</dbReference>
<dbReference type="NCBIfam" id="TIGR03692">
    <property type="entry name" value="ATP_dep_HslV"/>
    <property type="match status" value="1"/>
</dbReference>
<dbReference type="NCBIfam" id="NF003964">
    <property type="entry name" value="PRK05456.1"/>
    <property type="match status" value="1"/>
</dbReference>
<dbReference type="PANTHER" id="PTHR32194:SF0">
    <property type="entry name" value="ATP-DEPENDENT PROTEASE SUBUNIT HSLV"/>
    <property type="match status" value="1"/>
</dbReference>
<dbReference type="PANTHER" id="PTHR32194">
    <property type="entry name" value="METALLOPROTEASE TLDD"/>
    <property type="match status" value="1"/>
</dbReference>
<dbReference type="Pfam" id="PF00227">
    <property type="entry name" value="Proteasome"/>
    <property type="match status" value="1"/>
</dbReference>
<dbReference type="PIRSF" id="PIRSF039093">
    <property type="entry name" value="HslV"/>
    <property type="match status" value="1"/>
</dbReference>
<dbReference type="SUPFAM" id="SSF56235">
    <property type="entry name" value="N-terminal nucleophile aminohydrolases (Ntn hydrolases)"/>
    <property type="match status" value="1"/>
</dbReference>
<dbReference type="PROSITE" id="PS51476">
    <property type="entry name" value="PROTEASOME_BETA_2"/>
    <property type="match status" value="1"/>
</dbReference>
<accession>Q5WYQ9</accession>
<organism>
    <name type="scientific">Legionella pneumophila (strain Lens)</name>
    <dbReference type="NCBI Taxonomy" id="297245"/>
    <lineage>
        <taxon>Bacteria</taxon>
        <taxon>Pseudomonadati</taxon>
        <taxon>Pseudomonadota</taxon>
        <taxon>Gammaproteobacteria</taxon>
        <taxon>Legionellales</taxon>
        <taxon>Legionellaceae</taxon>
        <taxon>Legionella</taxon>
    </lineage>
</organism>
<sequence length="182" mass="19724">MEQFHGTTILSVRRGNQVVIGGDGQVTLGNTVMKGNARKVRRLYKDKVIAGFAGGTADAFTLFERFEAKLEMHQGHLIRAAVELAKDWRTDRILRRLEAVLAVADSKASLIITGNGDVIEPEESLIAIGSGGPFAQAAARALMENTQLSAKEIVQKSLTIAGDICIYTNNNLTIEELNDEGK</sequence>
<feature type="chain" id="PRO_1000012630" description="ATP-dependent protease subunit HslV">
    <location>
        <begin position="1"/>
        <end position="182"/>
    </location>
</feature>
<feature type="active site" evidence="1">
    <location>
        <position position="7"/>
    </location>
</feature>
<feature type="binding site" evidence="1">
    <location>
        <position position="162"/>
    </location>
    <ligand>
        <name>Na(+)</name>
        <dbReference type="ChEBI" id="CHEBI:29101"/>
    </ligand>
</feature>
<feature type="binding site" evidence="1">
    <location>
        <position position="165"/>
    </location>
    <ligand>
        <name>Na(+)</name>
        <dbReference type="ChEBI" id="CHEBI:29101"/>
    </ligand>
</feature>
<feature type="binding site" evidence="1">
    <location>
        <position position="168"/>
    </location>
    <ligand>
        <name>Na(+)</name>
        <dbReference type="ChEBI" id="CHEBI:29101"/>
    </ligand>
</feature>
<evidence type="ECO:0000255" key="1">
    <source>
        <dbReference type="HAMAP-Rule" id="MF_00248"/>
    </source>
</evidence>